<accession>O54458</accession>
<protein>
    <recommendedName>
        <fullName evidence="1">Putative phosphoenolpyruvate synthase regulatory protein</fullName>
        <shortName evidence="1">PEP synthase regulatory protein</shortName>
        <shortName evidence="1">PSRP</shortName>
        <ecNumber evidence="1">2.7.11.33</ecNumber>
        <ecNumber evidence="1">2.7.4.28</ecNumber>
    </recommendedName>
    <alternativeName>
        <fullName evidence="1">Pyruvate, water dikinase regulatory protein</fullName>
    </alternativeName>
</protein>
<feature type="chain" id="PRO_0000196655" description="Putative phosphoenolpyruvate synthase regulatory protein">
    <location>
        <begin position="1"/>
        <end position="290"/>
    </location>
</feature>
<feature type="binding site" evidence="1">
    <location>
        <begin position="170"/>
        <end position="177"/>
    </location>
    <ligand>
        <name>ADP</name>
        <dbReference type="ChEBI" id="CHEBI:456216"/>
    </ligand>
</feature>
<name>PSRP_ENTAG</name>
<sequence>MAHAECSLLSEADFVMTTDRSVFYISDGTAITAEVLGHAVLSQFPVNITSLTLPFVENVQRALAVKAQINALYQQSGVRPLVFFSIVTPEVRDIIVQSDGFCQDIVQALVAPLQQELGLSPAPVAHRTHGLDASNLGKYDARIAAIDYTLAHDDGISLRGLEDAQVILLGVSRCGKTPTSLYLAMQFGIRAANYPFIADDMDNLKLPPALRAHQNKLFGLTIDPERLAAIRQERAENTRYASMRQCRLEVGEVEALFRTHQIRYLNSTNYSVEEIATKILDIMGLTRRMY</sequence>
<dbReference type="EC" id="2.7.11.33" evidence="1"/>
<dbReference type="EC" id="2.7.4.28" evidence="1"/>
<dbReference type="EMBL" id="U93355">
    <property type="protein sequence ID" value="AAB96399.1"/>
    <property type="molecule type" value="Genomic_DNA"/>
</dbReference>
<dbReference type="SMR" id="O54458"/>
<dbReference type="STRING" id="549.BEE12_15410"/>
<dbReference type="eggNOG" id="COG1806">
    <property type="taxonomic scope" value="Bacteria"/>
</dbReference>
<dbReference type="GO" id="GO:0043531">
    <property type="term" value="F:ADP binding"/>
    <property type="evidence" value="ECO:0007669"/>
    <property type="project" value="UniProtKB-UniRule"/>
</dbReference>
<dbReference type="GO" id="GO:0005524">
    <property type="term" value="F:ATP binding"/>
    <property type="evidence" value="ECO:0007669"/>
    <property type="project" value="InterPro"/>
</dbReference>
<dbReference type="GO" id="GO:0016776">
    <property type="term" value="F:phosphotransferase activity, phosphate group as acceptor"/>
    <property type="evidence" value="ECO:0007669"/>
    <property type="project" value="UniProtKB-UniRule"/>
</dbReference>
<dbReference type="GO" id="GO:0004674">
    <property type="term" value="F:protein serine/threonine kinase activity"/>
    <property type="evidence" value="ECO:0007669"/>
    <property type="project" value="UniProtKB-UniRule"/>
</dbReference>
<dbReference type="HAMAP" id="MF_01062">
    <property type="entry name" value="PSRP"/>
    <property type="match status" value="1"/>
</dbReference>
<dbReference type="InterPro" id="IPR005177">
    <property type="entry name" value="Kinase-pyrophosphorylase"/>
</dbReference>
<dbReference type="InterPro" id="IPR026530">
    <property type="entry name" value="PSRP"/>
</dbReference>
<dbReference type="NCBIfam" id="NF003742">
    <property type="entry name" value="PRK05339.1"/>
    <property type="match status" value="1"/>
</dbReference>
<dbReference type="PANTHER" id="PTHR31756">
    <property type="entry name" value="PYRUVATE, PHOSPHATE DIKINASE REGULATORY PROTEIN 1, CHLOROPLASTIC"/>
    <property type="match status" value="1"/>
</dbReference>
<dbReference type="PANTHER" id="PTHR31756:SF3">
    <property type="entry name" value="PYRUVATE, PHOSPHATE DIKINASE REGULATORY PROTEIN 1, CHLOROPLASTIC"/>
    <property type="match status" value="1"/>
</dbReference>
<dbReference type="Pfam" id="PF03618">
    <property type="entry name" value="Kinase-PPPase"/>
    <property type="match status" value="1"/>
</dbReference>
<reference key="1">
    <citation type="journal article" date="1998" name="J. Bacteriol.">
        <title>Substrate ambiguity of 3-deoxy-D-manno-octulosonate 8-phosphate synthase from Neisseria gonorrhoeae in the context of its membership in a protein family containing a subset of 3-deoxy-D-arabino-heptulosonate 7-phosphate synthases.</title>
        <authorList>
            <person name="Subramaniam P.S."/>
            <person name="Xie G."/>
            <person name="Xia T."/>
            <person name="Jensen R.A."/>
        </authorList>
    </citation>
    <scope>NUCLEOTIDE SEQUENCE [GENOMIC DNA]</scope>
</reference>
<comment type="function">
    <text evidence="1">Bifunctional serine/threonine kinase and phosphorylase involved in the regulation of the phosphoenolpyruvate synthase (PEPS) by catalyzing its phosphorylation/dephosphorylation.</text>
</comment>
<comment type="catalytic activity">
    <reaction evidence="1">
        <text>[pyruvate, water dikinase] + ADP = [pyruvate, water dikinase]-phosphate + AMP + H(+)</text>
        <dbReference type="Rhea" id="RHEA:46020"/>
        <dbReference type="Rhea" id="RHEA-COMP:11425"/>
        <dbReference type="Rhea" id="RHEA-COMP:11426"/>
        <dbReference type="ChEBI" id="CHEBI:15378"/>
        <dbReference type="ChEBI" id="CHEBI:43176"/>
        <dbReference type="ChEBI" id="CHEBI:68546"/>
        <dbReference type="ChEBI" id="CHEBI:456215"/>
        <dbReference type="ChEBI" id="CHEBI:456216"/>
        <dbReference type="EC" id="2.7.11.33"/>
    </reaction>
</comment>
<comment type="catalytic activity">
    <reaction evidence="1">
        <text>[pyruvate, water dikinase]-phosphate + phosphate + H(+) = [pyruvate, water dikinase] + diphosphate</text>
        <dbReference type="Rhea" id="RHEA:48580"/>
        <dbReference type="Rhea" id="RHEA-COMP:11425"/>
        <dbReference type="Rhea" id="RHEA-COMP:11426"/>
        <dbReference type="ChEBI" id="CHEBI:15378"/>
        <dbReference type="ChEBI" id="CHEBI:33019"/>
        <dbReference type="ChEBI" id="CHEBI:43176"/>
        <dbReference type="ChEBI" id="CHEBI:43474"/>
        <dbReference type="ChEBI" id="CHEBI:68546"/>
        <dbReference type="EC" id="2.7.4.28"/>
    </reaction>
</comment>
<comment type="similarity">
    <text evidence="1">Belongs to the pyruvate, phosphate/water dikinase regulatory protein family. PSRP subfamily.</text>
</comment>
<proteinExistence type="inferred from homology"/>
<keyword id="KW-0418">Kinase</keyword>
<keyword id="KW-0547">Nucleotide-binding</keyword>
<keyword id="KW-0723">Serine/threonine-protein kinase</keyword>
<keyword id="KW-0808">Transferase</keyword>
<evidence type="ECO:0000255" key="1">
    <source>
        <dbReference type="HAMAP-Rule" id="MF_01062"/>
    </source>
</evidence>
<gene>
    <name type="primary">ydiA</name>
</gene>
<organism>
    <name type="scientific">Enterobacter agglomerans</name>
    <name type="common">Erwinia herbicola</name>
    <name type="synonym">Pantoea agglomerans</name>
    <dbReference type="NCBI Taxonomy" id="549"/>
    <lineage>
        <taxon>Bacteria</taxon>
        <taxon>Pseudomonadati</taxon>
        <taxon>Pseudomonadota</taxon>
        <taxon>Gammaproteobacteria</taxon>
        <taxon>Enterobacterales</taxon>
        <taxon>Erwiniaceae</taxon>
        <taxon>Pantoea</taxon>
        <taxon>Pantoea agglomerans group</taxon>
    </lineage>
</organism>